<name>RBD2_EREGS</name>
<accession>Q755H8</accession>
<keyword id="KW-0333">Golgi apparatus</keyword>
<keyword id="KW-0378">Hydrolase</keyword>
<keyword id="KW-0472">Membrane</keyword>
<keyword id="KW-0645">Protease</keyword>
<keyword id="KW-1185">Reference proteome</keyword>
<keyword id="KW-0720">Serine protease</keyword>
<keyword id="KW-0812">Transmembrane</keyword>
<keyword id="KW-1133">Transmembrane helix</keyword>
<proteinExistence type="inferred from homology"/>
<protein>
    <recommendedName>
        <fullName evidence="4">Rhomboid-type serine protease 2</fullName>
        <ecNumber evidence="2">3.4.21.105</ecNumber>
    </recommendedName>
    <alternativeName>
        <fullName evidence="4">Rhomboid protein 2</fullName>
    </alternativeName>
</protein>
<organism>
    <name type="scientific">Eremothecium gossypii (strain ATCC 10895 / CBS 109.51 / FGSC 9923 / NRRL Y-1056)</name>
    <name type="common">Yeast</name>
    <name type="synonym">Ashbya gossypii</name>
    <dbReference type="NCBI Taxonomy" id="284811"/>
    <lineage>
        <taxon>Eukaryota</taxon>
        <taxon>Fungi</taxon>
        <taxon>Dikarya</taxon>
        <taxon>Ascomycota</taxon>
        <taxon>Saccharomycotina</taxon>
        <taxon>Saccharomycetes</taxon>
        <taxon>Saccharomycetales</taxon>
        <taxon>Saccharomycetaceae</taxon>
        <taxon>Eremothecium</taxon>
    </lineage>
</organism>
<gene>
    <name type="primary">RBD2</name>
    <name type="ordered locus">AFL155C</name>
</gene>
<comment type="function">
    <text evidence="2">Probable rhomboid-type serine protease that catalyzes intramembrane proteolysis.</text>
</comment>
<comment type="catalytic activity">
    <reaction evidence="2">
        <text>Cleaves type-1 transmembrane domains using a catalytic dyad composed of serine and histidine that are contributed by different transmembrane domains.</text>
        <dbReference type="EC" id="3.4.21.105"/>
    </reaction>
</comment>
<comment type="subcellular location">
    <subcellularLocation>
        <location evidence="1">Golgi apparatus membrane</location>
        <topology evidence="1">Multi-pass membrane protein</topology>
    </subcellularLocation>
    <subcellularLocation>
        <location evidence="1">Golgi apparatus</location>
        <location evidence="1">cis-Golgi network membrane</location>
        <topology evidence="1">Multi-pass membrane protein</topology>
    </subcellularLocation>
</comment>
<comment type="similarity">
    <text evidence="4">Belongs to the peptidase S54 family.</text>
</comment>
<evidence type="ECO:0000250" key="1"/>
<evidence type="ECO:0000250" key="2">
    <source>
        <dbReference type="UniProtKB" id="O74926"/>
    </source>
</evidence>
<evidence type="ECO:0000255" key="3"/>
<evidence type="ECO:0000305" key="4"/>
<sequence length="261" mass="29156">MDWKSMLRTGVHKPGALTAGLSVFLTLVYVLNWVFPINEKILLDPGALRKLQLTRLSLYPLAHLSIFHLLLNLMSLFVPLSMFEASHGTVFTGITLNLLAIVTGVVYCLVGMLLYPNVYVGGASGWCFTLCGYFAVQEAGFRPHYELASLKMPTLYIPLVFLVLVTLLMPGSSFVGHLIGLGLGYLIGFRERWLQMATPPGWLIVKIETWLDRWISMIPSVVKYHRESSVDRTAGYTPLYQESELPLHNDNFPGQGRVLGP</sequence>
<reference key="1">
    <citation type="journal article" date="2004" name="Science">
        <title>The Ashbya gossypii genome as a tool for mapping the ancient Saccharomyces cerevisiae genome.</title>
        <authorList>
            <person name="Dietrich F.S."/>
            <person name="Voegeli S."/>
            <person name="Brachat S."/>
            <person name="Lerch A."/>
            <person name="Gates K."/>
            <person name="Steiner S."/>
            <person name="Mohr C."/>
            <person name="Poehlmann R."/>
            <person name="Luedi P."/>
            <person name="Choi S."/>
            <person name="Wing R.A."/>
            <person name="Flavier A."/>
            <person name="Gaffney T.D."/>
            <person name="Philippsen P."/>
        </authorList>
    </citation>
    <scope>NUCLEOTIDE SEQUENCE [LARGE SCALE GENOMIC DNA]</scope>
    <source>
        <strain>ATCC 10895 / CBS 109.51 / FGSC 9923 / NRRL Y-1056</strain>
    </source>
</reference>
<reference key="2">
    <citation type="journal article" date="2013" name="G3 (Bethesda)">
        <title>Genomes of Ashbya fungi isolated from insects reveal four mating-type loci, numerous translocations, lack of transposons, and distinct gene duplications.</title>
        <authorList>
            <person name="Dietrich F.S."/>
            <person name="Voegeli S."/>
            <person name="Kuo S."/>
            <person name="Philippsen P."/>
        </authorList>
    </citation>
    <scope>GENOME REANNOTATION</scope>
    <source>
        <strain>ATCC 10895 / CBS 109.51 / FGSC 9923 / NRRL Y-1056</strain>
    </source>
</reference>
<feature type="chain" id="PRO_0000206182" description="Rhomboid-type serine protease 2">
    <location>
        <begin position="1"/>
        <end position="261"/>
    </location>
</feature>
<feature type="transmembrane region" description="Helical" evidence="3">
    <location>
        <begin position="17"/>
        <end position="37"/>
    </location>
</feature>
<feature type="transmembrane region" description="Helical" evidence="3">
    <location>
        <begin position="58"/>
        <end position="78"/>
    </location>
</feature>
<feature type="transmembrane region" description="Helical" evidence="3">
    <location>
        <begin position="94"/>
        <end position="114"/>
    </location>
</feature>
<feature type="transmembrane region" description="Helical" evidence="3">
    <location>
        <begin position="116"/>
        <end position="136"/>
    </location>
</feature>
<feature type="transmembrane region" description="Helical" evidence="3">
    <location>
        <begin position="155"/>
        <end position="175"/>
    </location>
</feature>
<feature type="active site" description="Nucleophile" evidence="2">
    <location>
        <position position="124"/>
    </location>
</feature>
<feature type="active site" evidence="2">
    <location>
        <position position="177"/>
    </location>
</feature>
<dbReference type="EC" id="3.4.21.105" evidence="2"/>
<dbReference type="EMBL" id="AE016819">
    <property type="protein sequence ID" value="AAS53219.1"/>
    <property type="molecule type" value="Genomic_DNA"/>
</dbReference>
<dbReference type="RefSeq" id="NP_985395.1">
    <property type="nucleotide sequence ID" value="NM_210749.1"/>
</dbReference>
<dbReference type="FunCoup" id="Q755H8">
    <property type="interactions" value="81"/>
</dbReference>
<dbReference type="STRING" id="284811.Q755H8"/>
<dbReference type="EnsemblFungi" id="AAS53219">
    <property type="protein sequence ID" value="AAS53219"/>
    <property type="gene ID" value="AGOS_AFL155C"/>
</dbReference>
<dbReference type="GeneID" id="4621621"/>
<dbReference type="KEGG" id="ago:AGOS_AFL155C"/>
<dbReference type="eggNOG" id="KOG2632">
    <property type="taxonomic scope" value="Eukaryota"/>
</dbReference>
<dbReference type="HOGENOM" id="CLU_071084_0_0_1"/>
<dbReference type="InParanoid" id="Q755H8"/>
<dbReference type="OMA" id="NTYPIVH"/>
<dbReference type="OrthoDB" id="10257275at2759"/>
<dbReference type="Proteomes" id="UP000000591">
    <property type="component" value="Chromosome VI"/>
</dbReference>
<dbReference type="GO" id="GO:0000139">
    <property type="term" value="C:Golgi membrane"/>
    <property type="evidence" value="ECO:0007669"/>
    <property type="project" value="UniProtKB-SubCell"/>
</dbReference>
<dbReference type="GO" id="GO:0034399">
    <property type="term" value="C:nuclear periphery"/>
    <property type="evidence" value="ECO:0007669"/>
    <property type="project" value="EnsemblFungi"/>
</dbReference>
<dbReference type="GO" id="GO:0004252">
    <property type="term" value="F:serine-type endopeptidase activity"/>
    <property type="evidence" value="ECO:0000318"/>
    <property type="project" value="GO_Central"/>
</dbReference>
<dbReference type="GO" id="GO:0006508">
    <property type="term" value="P:proteolysis"/>
    <property type="evidence" value="ECO:0007669"/>
    <property type="project" value="UniProtKB-KW"/>
</dbReference>
<dbReference type="Gene3D" id="1.20.1540.10">
    <property type="entry name" value="Rhomboid-like"/>
    <property type="match status" value="1"/>
</dbReference>
<dbReference type="InterPro" id="IPR022764">
    <property type="entry name" value="Peptidase_S54_rhomboid_dom"/>
</dbReference>
<dbReference type="InterPro" id="IPR035952">
    <property type="entry name" value="Rhomboid-like_sf"/>
</dbReference>
<dbReference type="PANTHER" id="PTHR43066:SF1">
    <property type="entry name" value="RHOMBOID PROTEIN 2"/>
    <property type="match status" value="1"/>
</dbReference>
<dbReference type="PANTHER" id="PTHR43066">
    <property type="entry name" value="RHOMBOID-RELATED PROTEIN"/>
    <property type="match status" value="1"/>
</dbReference>
<dbReference type="Pfam" id="PF01694">
    <property type="entry name" value="Rhomboid"/>
    <property type="match status" value="1"/>
</dbReference>
<dbReference type="SUPFAM" id="SSF144091">
    <property type="entry name" value="Rhomboid-like"/>
    <property type="match status" value="1"/>
</dbReference>